<dbReference type="EC" id="2.4.1.102" evidence="5"/>
<dbReference type="EMBL" id="U19265">
    <property type="protein sequence ID" value="AAA60948.1"/>
    <property type="molecule type" value="mRNA"/>
</dbReference>
<dbReference type="EMBL" id="D87332">
    <property type="protein sequence ID" value="BAA22998.1"/>
    <property type="molecule type" value="mRNA"/>
</dbReference>
<dbReference type="EMBL" id="D87333">
    <property type="protein sequence ID" value="BAA22999.1"/>
    <property type="molecule type" value="mRNA"/>
</dbReference>
<dbReference type="EMBL" id="AK045216">
    <property type="protein sequence ID" value="BAC32265.1"/>
    <property type="molecule type" value="mRNA"/>
</dbReference>
<dbReference type="CCDS" id="CCDS29687.1"/>
<dbReference type="RefSeq" id="NP_001129956.3">
    <property type="nucleotide sequence ID" value="NM_001136484.3"/>
</dbReference>
<dbReference type="RefSeq" id="NP_034395.4">
    <property type="nucleotide sequence ID" value="NM_010265.5"/>
</dbReference>
<dbReference type="RefSeq" id="NP_775618.3">
    <property type="nucleotide sequence ID" value="NM_173442.5"/>
</dbReference>
<dbReference type="PDB" id="2GAK">
    <property type="method" value="X-ray"/>
    <property type="resolution" value="2.00 A"/>
    <property type="chains" value="A/B=38-428"/>
</dbReference>
<dbReference type="PDB" id="2GAM">
    <property type="method" value="X-ray"/>
    <property type="resolution" value="2.70 A"/>
    <property type="chains" value="A/B/C/D=38-428"/>
</dbReference>
<dbReference type="PDB" id="3OTK">
    <property type="method" value="X-ray"/>
    <property type="resolution" value="2.30 A"/>
    <property type="chains" value="A/B/C/D=38-428"/>
</dbReference>
<dbReference type="PDBsum" id="2GAK"/>
<dbReference type="PDBsum" id="2GAM"/>
<dbReference type="PDBsum" id="3OTK"/>
<dbReference type="SMR" id="Q09324"/>
<dbReference type="FunCoup" id="Q09324">
    <property type="interactions" value="105"/>
</dbReference>
<dbReference type="STRING" id="10090.ENSMUSP00000133935"/>
<dbReference type="CAZy" id="GT14">
    <property type="family name" value="Glycosyltransferase Family 14"/>
</dbReference>
<dbReference type="GlyCosmos" id="Q09324">
    <property type="glycosylation" value="2 sites, No reported glycans"/>
</dbReference>
<dbReference type="GlyGen" id="Q09324">
    <property type="glycosylation" value="2 sites, 2 N-linked glycans (2 sites)"/>
</dbReference>
<dbReference type="iPTMnet" id="Q09324"/>
<dbReference type="PhosphoSitePlus" id="Q09324"/>
<dbReference type="jPOST" id="Q09324"/>
<dbReference type="PaxDb" id="10090-ENSMUSP00000133935"/>
<dbReference type="ProteomicsDB" id="265732"/>
<dbReference type="Antibodypedia" id="27275">
    <property type="antibodies" value="218 antibodies from 24 providers"/>
</dbReference>
<dbReference type="DNASU" id="14537"/>
<dbReference type="Ensembl" id="ENSMUST00000169897.2">
    <property type="protein sequence ID" value="ENSMUSP00000127835.2"/>
    <property type="gene ID" value="ENSMUSG00000038843.19"/>
</dbReference>
<dbReference type="Ensembl" id="ENSMUST00000174236.8">
    <property type="protein sequence ID" value="ENSMUSP00000133935.3"/>
    <property type="gene ID" value="ENSMUSG00000038843.19"/>
</dbReference>
<dbReference type="Ensembl" id="ENSMUST00000235184.2">
    <property type="protein sequence ID" value="ENSMUSP00000157544.2"/>
    <property type="gene ID" value="ENSMUSG00000038843.19"/>
</dbReference>
<dbReference type="Ensembl" id="ENSMUST00000236139.2">
    <property type="protein sequence ID" value="ENSMUSP00000157681.2"/>
    <property type="gene ID" value="ENSMUSG00000038843.19"/>
</dbReference>
<dbReference type="GeneID" id="14537"/>
<dbReference type="KEGG" id="mmu:14537"/>
<dbReference type="UCSC" id="uc008gxm.2">
    <property type="organism name" value="mouse"/>
</dbReference>
<dbReference type="AGR" id="MGI:95676"/>
<dbReference type="CTD" id="2650"/>
<dbReference type="MGI" id="MGI:95676">
    <property type="gene designation" value="Gcnt1"/>
</dbReference>
<dbReference type="VEuPathDB" id="HostDB:ENSMUSG00000038843"/>
<dbReference type="eggNOG" id="KOG0799">
    <property type="taxonomic scope" value="Eukaryota"/>
</dbReference>
<dbReference type="GeneTree" id="ENSGT00940000161348"/>
<dbReference type="HOGENOM" id="CLU_032341_1_2_1"/>
<dbReference type="InParanoid" id="Q09324"/>
<dbReference type="OMA" id="NGKLTNM"/>
<dbReference type="OrthoDB" id="2019572at2759"/>
<dbReference type="PhylomeDB" id="Q09324"/>
<dbReference type="BRENDA" id="2.4.1.102">
    <property type="organism ID" value="3474"/>
</dbReference>
<dbReference type="Reactome" id="R-MMU-913709">
    <property type="pathway name" value="O-linked glycosylation of mucins"/>
</dbReference>
<dbReference type="UniPathway" id="UPA00378"/>
<dbReference type="BioGRID-ORCS" id="14537">
    <property type="hits" value="3 hits in 77 CRISPR screens"/>
</dbReference>
<dbReference type="ChiTaRS" id="Gcnt1">
    <property type="organism name" value="mouse"/>
</dbReference>
<dbReference type="EvolutionaryTrace" id="Q09324"/>
<dbReference type="PRO" id="PR:Q09324"/>
<dbReference type="Proteomes" id="UP000000589">
    <property type="component" value="Chromosome 19"/>
</dbReference>
<dbReference type="RNAct" id="Q09324">
    <property type="molecule type" value="protein"/>
</dbReference>
<dbReference type="Bgee" id="ENSMUSG00000038843">
    <property type="expression patterns" value="Expressed in right kidney and 201 other cell types or tissues"/>
</dbReference>
<dbReference type="GO" id="GO:0005615">
    <property type="term" value="C:extracellular space"/>
    <property type="evidence" value="ECO:0007669"/>
    <property type="project" value="Ensembl"/>
</dbReference>
<dbReference type="GO" id="GO:0031985">
    <property type="term" value="C:Golgi cisterna"/>
    <property type="evidence" value="ECO:0000250"/>
    <property type="project" value="UniProtKB"/>
</dbReference>
<dbReference type="GO" id="GO:0000139">
    <property type="term" value="C:Golgi membrane"/>
    <property type="evidence" value="ECO:0007669"/>
    <property type="project" value="UniProtKB-SubCell"/>
</dbReference>
<dbReference type="GO" id="GO:0005802">
    <property type="term" value="C:trans-Golgi network"/>
    <property type="evidence" value="ECO:0007669"/>
    <property type="project" value="Ensembl"/>
</dbReference>
<dbReference type="GO" id="GO:0003829">
    <property type="term" value="F:beta-1,3-galactosyl-O-glycosyl-glycoprotein beta-1,6-N-acetylglucosaminyltransferase activity"/>
    <property type="evidence" value="ECO:0000314"/>
    <property type="project" value="UniProtKB"/>
</dbReference>
<dbReference type="GO" id="GO:0000166">
    <property type="term" value="F:nucleotide binding"/>
    <property type="evidence" value="ECO:0007669"/>
    <property type="project" value="UniProtKB-KW"/>
</dbReference>
<dbReference type="GO" id="GO:0060352">
    <property type="term" value="P:cell adhesion molecule production"/>
    <property type="evidence" value="ECO:0000250"/>
    <property type="project" value="UniProtKB"/>
</dbReference>
<dbReference type="GO" id="GO:0016268">
    <property type="term" value="P:core 2 O-glycan biosynthetic process"/>
    <property type="evidence" value="ECO:0000315"/>
    <property type="project" value="UniProtKB"/>
</dbReference>
<dbReference type="GO" id="GO:0009101">
    <property type="term" value="P:glycoprotein biosynthetic process"/>
    <property type="evidence" value="ECO:0000250"/>
    <property type="project" value="UniProtKB"/>
</dbReference>
<dbReference type="GO" id="GO:0060993">
    <property type="term" value="P:kidney morphogenesis"/>
    <property type="evidence" value="ECO:0000316"/>
    <property type="project" value="MGI"/>
</dbReference>
<dbReference type="GO" id="GO:0050901">
    <property type="term" value="P:leukocyte tethering or rolling"/>
    <property type="evidence" value="ECO:0000250"/>
    <property type="project" value="UniProtKB"/>
</dbReference>
<dbReference type="GO" id="GO:1903238">
    <property type="term" value="P:positive regulation of leukocyte tethering or rolling"/>
    <property type="evidence" value="ECO:0000315"/>
    <property type="project" value="UniProtKB"/>
</dbReference>
<dbReference type="GO" id="GO:0032868">
    <property type="term" value="P:response to insulin"/>
    <property type="evidence" value="ECO:0007669"/>
    <property type="project" value="Ensembl"/>
</dbReference>
<dbReference type="GO" id="GO:0048729">
    <property type="term" value="P:tissue morphogenesis"/>
    <property type="evidence" value="ECO:0000316"/>
    <property type="project" value="MGI"/>
</dbReference>
<dbReference type="InterPro" id="IPR003406">
    <property type="entry name" value="Glyco_trans_14"/>
</dbReference>
<dbReference type="PANTHER" id="PTHR19297:SF96">
    <property type="entry name" value="BETA-1,3-GALACTOSYL-O-GLYCOSYL-GLYCOPROTEIN BETA-1,6-N-ACETYLGLUCOSAMINYLTRANSFERASE"/>
    <property type="match status" value="1"/>
</dbReference>
<dbReference type="PANTHER" id="PTHR19297">
    <property type="entry name" value="GLYCOSYLTRANSFERASE 14 FAMILY MEMBER"/>
    <property type="match status" value="1"/>
</dbReference>
<dbReference type="Pfam" id="PF02485">
    <property type="entry name" value="Branch"/>
    <property type="match status" value="1"/>
</dbReference>
<evidence type="ECO:0000250" key="1">
    <source>
        <dbReference type="UniProtKB" id="Q02742"/>
    </source>
</evidence>
<evidence type="ECO:0000255" key="2"/>
<evidence type="ECO:0000269" key="3">
    <source>
    </source>
</evidence>
<evidence type="ECO:0000269" key="4">
    <source>
    </source>
</evidence>
<evidence type="ECO:0000269" key="5">
    <source>
    </source>
</evidence>
<evidence type="ECO:0000269" key="6">
    <source>
    </source>
</evidence>
<evidence type="ECO:0000269" key="7">
    <source>
    </source>
</evidence>
<evidence type="ECO:0000269" key="8">
    <source>
    </source>
</evidence>
<evidence type="ECO:0000303" key="9">
    <source>
    </source>
</evidence>
<evidence type="ECO:0000303" key="10">
    <source>
    </source>
</evidence>
<evidence type="ECO:0000305" key="11"/>
<evidence type="ECO:0000305" key="12">
    <source>
    </source>
</evidence>
<evidence type="ECO:0000305" key="13">
    <source>
    </source>
</evidence>
<evidence type="ECO:0000305" key="14">
    <source>
    </source>
</evidence>
<evidence type="ECO:0000305" key="15">
    <source>
    </source>
</evidence>
<evidence type="ECO:0000305" key="16">
    <source>
    </source>
</evidence>
<evidence type="ECO:0007744" key="17">
    <source>
        <dbReference type="PDB" id="2GAK"/>
    </source>
</evidence>
<evidence type="ECO:0007744" key="18">
    <source>
        <dbReference type="PDB" id="2GAM"/>
    </source>
</evidence>
<evidence type="ECO:0007744" key="19">
    <source>
        <dbReference type="PDB" id="3OTK"/>
    </source>
</evidence>
<evidence type="ECO:0007829" key="20">
    <source>
        <dbReference type="PDB" id="2GAK"/>
    </source>
</evidence>
<keyword id="KW-0002">3D-structure</keyword>
<keyword id="KW-0903">Direct protein sequencing</keyword>
<keyword id="KW-1015">Disulfide bond</keyword>
<keyword id="KW-0325">Glycoprotein</keyword>
<keyword id="KW-0328">Glycosyltransferase</keyword>
<keyword id="KW-0333">Golgi apparatus</keyword>
<keyword id="KW-0472">Membrane</keyword>
<keyword id="KW-0547">Nucleotide-binding</keyword>
<keyword id="KW-1185">Reference proteome</keyword>
<keyword id="KW-0735">Signal-anchor</keyword>
<keyword id="KW-0808">Transferase</keyword>
<keyword id="KW-0812">Transmembrane</keyword>
<keyword id="KW-1133">Transmembrane helix</keyword>
<comment type="function">
    <text evidence="3 5 6 8">Glycosyltransferase that catalyzes the transfer of an N-acetylglucosamine (GlcNAc) moiety in beta1-6 linkage from UDP-GlcNAc onto mucin-type core 1 O-glycan to form the branched mucin-type core 2 O-glycan. The catalysis is metal ion-independent and occurs with inversion of the anomeric configuration of sugar donor (PubMed:12954635, PubMed:22056345, PubMed:9881978). Selectively involved in synthesis of mucin-type core 2 O-glycans that serve as scaffolds for the display of selectin ligand sialyl Lewis X epitope by myeloid cells, with an impact on homeostasis and recruitment to inflammatory sites (PubMed:9881978). Can also act on glycolipid substrates. Transfers GlcNAc moiety to GalGb4Cer globosides in a reaction step to the synthesis of stage-specific embryonic antigen 1 (SSEA-1) determinant (PubMed:7983056). Can use Galbeta1-3GalNAcalpha1-R and Galbeta1-3GalNAcbeta1-R oligosaccharide derivatives as acceptor substrates (PubMed:7983056).</text>
</comment>
<comment type="catalytic activity">
    <reaction evidence="5">
        <text>a 3-O-[beta-D-galactosyl-(1-&gt;3)-N-acetyl-alpha-D-galactosaminyl]-L-seryl-[protein] + UDP-N-acetyl-alpha-D-glucosamine = 3-O-{beta-D-galactosyl-(1-&gt;3)-[N-acetyl-beta-D-glucosaminyl-(1-&gt;6)]-N-acetyl-alpha-D-galactosaminyl}-L-seryl-[protein] + UDP + H(+)</text>
        <dbReference type="Rhea" id="RHEA:56212"/>
        <dbReference type="Rhea" id="RHEA-COMP:13922"/>
        <dbReference type="Rhea" id="RHEA-COMP:14419"/>
        <dbReference type="ChEBI" id="CHEBI:15378"/>
        <dbReference type="ChEBI" id="CHEBI:57705"/>
        <dbReference type="ChEBI" id="CHEBI:58223"/>
        <dbReference type="ChEBI" id="CHEBI:137949"/>
        <dbReference type="ChEBI" id="CHEBI:139605"/>
        <dbReference type="EC" id="2.4.1.102"/>
    </reaction>
    <physiologicalReaction direction="left-to-right" evidence="12 14 16">
        <dbReference type="Rhea" id="RHEA:56213"/>
    </physiologicalReaction>
</comment>
<comment type="catalytic activity">
    <reaction evidence="5">
        <text>a 3-O-[beta-D-galactosyl-(1-&gt;3)-N-acetyl-alpha-D-galactosaminyl]-L-threonyl-[protein] + UDP-N-acetyl-alpha-D-glucosamine = a 3-O-{beta-D-galactosyl-(1-&gt;3)-[N-acetyl-beta-D-glucosaminyl-(1-&gt;6)]-N-acetyl-alpha-D-galactosaminyl}-L-threonyl-[protein] + UDP + H(+)</text>
        <dbReference type="Rhea" id="RHEA:56216"/>
        <dbReference type="Rhea" id="RHEA-COMP:13923"/>
        <dbReference type="Rhea" id="RHEA-COMP:14420"/>
        <dbReference type="ChEBI" id="CHEBI:15378"/>
        <dbReference type="ChEBI" id="CHEBI:57705"/>
        <dbReference type="ChEBI" id="CHEBI:58223"/>
        <dbReference type="ChEBI" id="CHEBI:137950"/>
        <dbReference type="ChEBI" id="CHEBI:139607"/>
        <dbReference type="EC" id="2.4.1.102"/>
    </reaction>
    <physiologicalReaction direction="left-to-right" evidence="12 14 16">
        <dbReference type="Rhea" id="RHEA:56217"/>
    </physiologicalReaction>
</comment>
<comment type="catalytic activity">
    <reaction evidence="6">
        <text>a globoside GalGb4Cer + UDP-N-acetyl-alpha-D-glucosamine = a globoside GlcNAc-(beta1-&gt;6)-GalGb4Cer + UDP + H(+)</text>
        <dbReference type="Rhea" id="RHEA:56900"/>
        <dbReference type="ChEBI" id="CHEBI:15378"/>
        <dbReference type="ChEBI" id="CHEBI:57705"/>
        <dbReference type="ChEBI" id="CHEBI:58223"/>
        <dbReference type="ChEBI" id="CHEBI:140691"/>
        <dbReference type="ChEBI" id="CHEBI:140702"/>
    </reaction>
    <physiologicalReaction direction="left-to-right" evidence="15">
        <dbReference type="Rhea" id="RHEA:56901"/>
    </physiologicalReaction>
</comment>
<comment type="catalytic activity">
    <reaction evidence="6">
        <text>a ganglioside GA1 + UDP-N-acetyl-alpha-D-glucosamine = a ganglioside beta-D-GlcNAc-(1-&gt;6)-GA1 + UDP + H(+)</text>
        <dbReference type="Rhea" id="RHEA:69691"/>
        <dbReference type="ChEBI" id="CHEBI:15378"/>
        <dbReference type="ChEBI" id="CHEBI:57705"/>
        <dbReference type="ChEBI" id="CHEBI:58223"/>
        <dbReference type="ChEBI" id="CHEBI:88069"/>
        <dbReference type="ChEBI" id="CHEBI:187897"/>
    </reaction>
    <physiologicalReaction direction="left-to-right" evidence="15">
        <dbReference type="Rhea" id="RHEA:69692"/>
    </physiologicalReaction>
</comment>
<comment type="activity regulation">
    <text evidence="3">Inactivated by thiol-reactive agents. Inhibited by free UDP.</text>
</comment>
<comment type="biophysicochemical properties">
    <kinetics>
        <KM evidence="3">1.1 mM for UDP-N-acetyl-alpha-D-glucosamine</KM>
        <KM evidence="3">0.11 mM for Beta-D-galactosyl-(1-&gt;3)-N-acetyl-alpha-D-galactosaminyl-R</KM>
        <KM evidence="6">0.11 mM for Globoside GalGb4Cer</KM>
        <KM evidence="6">0.31 mM for Ganglioside GA1</KM>
        <KM evidence="6">1.25 mM for and Galbeta1-3GalNAcalpha1-R</KM>
        <KM evidence="6">0.53 mM for Galbeta1-3GalNAcbeta1-R</KM>
        <Vmax evidence="3">9.2 umol/min/mg enzyme toward beta-D-galactosyl-(1-&gt;3)-N-acetyl-alpha-D-galactosaminyl-R</Vmax>
    </kinetics>
</comment>
<comment type="pathway">
    <text evidence="8">Protein modification; protein glycosylation.</text>
</comment>
<comment type="pathway">
    <text evidence="6">Glycolipid biosynthesis.</text>
</comment>
<comment type="subunit">
    <text evidence="1">Interacts with GOLPH3; may control GCNT1 retention in the Golgi.</text>
</comment>
<comment type="subcellular location">
    <subcellularLocation>
        <location evidence="1">Golgi apparatus membrane</location>
        <topology evidence="1">Single-pass type II membrane protein</topology>
    </subcellularLocation>
    <text evidence="1">Also detected in the trans-Golgi network.</text>
</comment>
<comment type="tissue specificity">
    <text evidence="6 7">Expressed in kidney, liver, stomach, spleen, lung and brain.</text>
</comment>
<comment type="PTM">
    <text evidence="3">N-glycosylated.</text>
</comment>
<comment type="disruption phenotype">
    <text evidence="8">Deficient mice show normal organogenesis and fertility. The loss of core 2 O-glycans on leukocytes is associated with leukocytosis and impaired neutrophil recruitment at the inflammatory site, while lymphocyte homing to peripheral lymphoid organs is not affected.</text>
</comment>
<comment type="similarity">
    <text evidence="11">Belongs to the glycosyltransferase 14 family.</text>
</comment>
<comment type="online information" name="Functional Glycomics Gateway - GTase">
    <link uri="http://www.functionalglycomics.org/glycomics/molecule/jsp/glycoEnzyme/viewGlycoEnzyme.jsp?gbpId=gt_mou_574"/>
    <text>core 2 beta 6 GlcNAc T1</text>
</comment>
<reference key="1">
    <citation type="submission" date="1994-12" db="EMBL/GenBank/DDBJ databases">
        <authorList>
            <person name="Warren C.E."/>
            <person name="Smookler D.S."/>
            <person name="Dennis J.W."/>
        </authorList>
    </citation>
    <scope>NUCLEOTIDE SEQUENCE [MRNA]</scope>
    <source>
        <strain>DBA/2J</strain>
    </source>
</reference>
<reference key="2">
    <citation type="journal article" date="1997" name="J. Biol. Chem.">
        <title>Tissue-specific regulation of mouse core 2 beta-1,6-N-acetylglucosaminyltransferase.</title>
        <authorList>
            <person name="Sekine M."/>
            <person name="Nara K."/>
            <person name="Suzuki A."/>
        </authorList>
    </citation>
    <scope>NUCLEOTIDE SEQUENCE [MRNA]</scope>
    <scope>TISSUE SPECIFICITY</scope>
    <source>
        <strain>BALB/cJ</strain>
        <tissue>Kidney</tissue>
        <tissue>Submandibular gland</tissue>
    </source>
</reference>
<reference key="3">
    <citation type="journal article" date="2005" name="Science">
        <title>The transcriptional landscape of the mammalian genome.</title>
        <authorList>
            <person name="Carninci P."/>
            <person name="Kasukawa T."/>
            <person name="Katayama S."/>
            <person name="Gough J."/>
            <person name="Frith M.C."/>
            <person name="Maeda N."/>
            <person name="Oyama R."/>
            <person name="Ravasi T."/>
            <person name="Lenhard B."/>
            <person name="Wells C."/>
            <person name="Kodzius R."/>
            <person name="Shimokawa K."/>
            <person name="Bajic V.B."/>
            <person name="Brenner S.E."/>
            <person name="Batalov S."/>
            <person name="Forrest A.R."/>
            <person name="Zavolan M."/>
            <person name="Davis M.J."/>
            <person name="Wilming L.G."/>
            <person name="Aidinis V."/>
            <person name="Allen J.E."/>
            <person name="Ambesi-Impiombato A."/>
            <person name="Apweiler R."/>
            <person name="Aturaliya R.N."/>
            <person name="Bailey T.L."/>
            <person name="Bansal M."/>
            <person name="Baxter L."/>
            <person name="Beisel K.W."/>
            <person name="Bersano T."/>
            <person name="Bono H."/>
            <person name="Chalk A.M."/>
            <person name="Chiu K.P."/>
            <person name="Choudhary V."/>
            <person name="Christoffels A."/>
            <person name="Clutterbuck D.R."/>
            <person name="Crowe M.L."/>
            <person name="Dalla E."/>
            <person name="Dalrymple B.P."/>
            <person name="de Bono B."/>
            <person name="Della Gatta G."/>
            <person name="di Bernardo D."/>
            <person name="Down T."/>
            <person name="Engstrom P."/>
            <person name="Fagiolini M."/>
            <person name="Faulkner G."/>
            <person name="Fletcher C.F."/>
            <person name="Fukushima T."/>
            <person name="Furuno M."/>
            <person name="Futaki S."/>
            <person name="Gariboldi M."/>
            <person name="Georgii-Hemming P."/>
            <person name="Gingeras T.R."/>
            <person name="Gojobori T."/>
            <person name="Green R.E."/>
            <person name="Gustincich S."/>
            <person name="Harbers M."/>
            <person name="Hayashi Y."/>
            <person name="Hensch T.K."/>
            <person name="Hirokawa N."/>
            <person name="Hill D."/>
            <person name="Huminiecki L."/>
            <person name="Iacono M."/>
            <person name="Ikeo K."/>
            <person name="Iwama A."/>
            <person name="Ishikawa T."/>
            <person name="Jakt M."/>
            <person name="Kanapin A."/>
            <person name="Katoh M."/>
            <person name="Kawasawa Y."/>
            <person name="Kelso J."/>
            <person name="Kitamura H."/>
            <person name="Kitano H."/>
            <person name="Kollias G."/>
            <person name="Krishnan S.P."/>
            <person name="Kruger A."/>
            <person name="Kummerfeld S.K."/>
            <person name="Kurochkin I.V."/>
            <person name="Lareau L.F."/>
            <person name="Lazarevic D."/>
            <person name="Lipovich L."/>
            <person name="Liu J."/>
            <person name="Liuni S."/>
            <person name="McWilliam S."/>
            <person name="Madan Babu M."/>
            <person name="Madera M."/>
            <person name="Marchionni L."/>
            <person name="Matsuda H."/>
            <person name="Matsuzawa S."/>
            <person name="Miki H."/>
            <person name="Mignone F."/>
            <person name="Miyake S."/>
            <person name="Morris K."/>
            <person name="Mottagui-Tabar S."/>
            <person name="Mulder N."/>
            <person name="Nakano N."/>
            <person name="Nakauchi H."/>
            <person name="Ng P."/>
            <person name="Nilsson R."/>
            <person name="Nishiguchi S."/>
            <person name="Nishikawa S."/>
            <person name="Nori F."/>
            <person name="Ohara O."/>
            <person name="Okazaki Y."/>
            <person name="Orlando V."/>
            <person name="Pang K.C."/>
            <person name="Pavan W.J."/>
            <person name="Pavesi G."/>
            <person name="Pesole G."/>
            <person name="Petrovsky N."/>
            <person name="Piazza S."/>
            <person name="Reed J."/>
            <person name="Reid J.F."/>
            <person name="Ring B.Z."/>
            <person name="Ringwald M."/>
            <person name="Rost B."/>
            <person name="Ruan Y."/>
            <person name="Salzberg S.L."/>
            <person name="Sandelin A."/>
            <person name="Schneider C."/>
            <person name="Schoenbach C."/>
            <person name="Sekiguchi K."/>
            <person name="Semple C.A."/>
            <person name="Seno S."/>
            <person name="Sessa L."/>
            <person name="Sheng Y."/>
            <person name="Shibata Y."/>
            <person name="Shimada H."/>
            <person name="Shimada K."/>
            <person name="Silva D."/>
            <person name="Sinclair B."/>
            <person name="Sperling S."/>
            <person name="Stupka E."/>
            <person name="Sugiura K."/>
            <person name="Sultana R."/>
            <person name="Takenaka Y."/>
            <person name="Taki K."/>
            <person name="Tammoja K."/>
            <person name="Tan S.L."/>
            <person name="Tang S."/>
            <person name="Taylor M.S."/>
            <person name="Tegner J."/>
            <person name="Teichmann S.A."/>
            <person name="Ueda H.R."/>
            <person name="van Nimwegen E."/>
            <person name="Verardo R."/>
            <person name="Wei C.L."/>
            <person name="Yagi K."/>
            <person name="Yamanishi H."/>
            <person name="Zabarovsky E."/>
            <person name="Zhu S."/>
            <person name="Zimmer A."/>
            <person name="Hide W."/>
            <person name="Bult C."/>
            <person name="Grimmond S.M."/>
            <person name="Teasdale R.D."/>
            <person name="Liu E.T."/>
            <person name="Brusic V."/>
            <person name="Quackenbush J."/>
            <person name="Wahlestedt C."/>
            <person name="Mattick J.S."/>
            <person name="Hume D.A."/>
            <person name="Kai C."/>
            <person name="Sasaki D."/>
            <person name="Tomaru Y."/>
            <person name="Fukuda S."/>
            <person name="Kanamori-Katayama M."/>
            <person name="Suzuki M."/>
            <person name="Aoki J."/>
            <person name="Arakawa T."/>
            <person name="Iida J."/>
            <person name="Imamura K."/>
            <person name="Itoh M."/>
            <person name="Kato T."/>
            <person name="Kawaji H."/>
            <person name="Kawagashira N."/>
            <person name="Kawashima T."/>
            <person name="Kojima M."/>
            <person name="Kondo S."/>
            <person name="Konno H."/>
            <person name="Nakano K."/>
            <person name="Ninomiya N."/>
            <person name="Nishio T."/>
            <person name="Okada M."/>
            <person name="Plessy C."/>
            <person name="Shibata K."/>
            <person name="Shiraki T."/>
            <person name="Suzuki S."/>
            <person name="Tagami M."/>
            <person name="Waki K."/>
            <person name="Watahiki A."/>
            <person name="Okamura-Oho Y."/>
            <person name="Suzuki H."/>
            <person name="Kawai J."/>
            <person name="Hayashizaki Y."/>
        </authorList>
    </citation>
    <scope>NUCLEOTIDE SEQUENCE [LARGE SCALE MRNA]</scope>
    <source>
        <strain>C57BL/6J</strain>
        <tissue>Embryo</tissue>
    </source>
</reference>
<reference key="4">
    <citation type="journal article" date="1994" name="J. Biol. Chem.">
        <title>Purification and characterization of UDP-GlcNAc:IV3 beta Gal-Gb4Cer beta-1,6-GlcNAc transferase from mouse kidney.</title>
        <authorList>
            <person name="Sekine M."/>
            <person name="Hashimoto Y."/>
            <person name="Suzuki M."/>
            <person name="Inagaki F."/>
            <person name="Takio K."/>
            <person name="Suzuki A."/>
        </authorList>
    </citation>
    <scope>PROTEIN SEQUENCE OF 62-72; 109-116; 225-232 AND 258-265</scope>
    <scope>FUNCTION</scope>
    <scope>CATALYTIC ACTIVITY</scope>
    <scope>BIOPHYSICOCHEMICAL PROPERTIES</scope>
    <scope>PATHWAY</scope>
    <scope>TISSUE SPECIFICITY</scope>
    <source>
        <tissue>Kidney</tissue>
    </source>
</reference>
<reference key="5">
    <citation type="journal article" date="1998" name="Immunity">
        <title>Core 2 oligosaccharide biosynthesis distinguishes between selectin ligands essential for leukocyte homing and inflammation.</title>
        <authorList>
            <person name="Ellies L.G."/>
            <person name="Tsuboi S."/>
            <person name="Petryniak B."/>
            <person name="Lowe J.B."/>
            <person name="Fukuda M."/>
            <person name="Marth J.D."/>
        </authorList>
    </citation>
    <scope>FUNCTION</scope>
    <scope>CATALYTIC ACTIVITY</scope>
    <scope>PATHWAY</scope>
    <scope>DISRUPTION PHENOTYPE</scope>
</reference>
<reference key="6">
    <citation type="journal article" date="2003" name="J. Biol. Chem.">
        <title>Highly conserved cysteines of mouse core 2 beta1,6-N-acetylglucosaminyltransferase I form a network of disulfide bonds and include a thiol that affects enzyme activity.</title>
        <authorList>
            <person name="Yen T.Y."/>
            <person name="Macher B.A."/>
            <person name="Bryson S."/>
            <person name="Chang X."/>
            <person name="Tvaroska I."/>
            <person name="Tse R."/>
            <person name="Takeshita S."/>
            <person name="Lew A.M."/>
            <person name="Datti A."/>
        </authorList>
    </citation>
    <scope>FUNCTION</scope>
    <scope>CATALYTIC ACTIVITY</scope>
    <scope>BIOPHYSICOCHEMICAL PROPERTIES</scope>
    <scope>ACTIVITY REGULATION</scope>
    <scope>MUTAGENESIS OF CYS-217</scope>
    <scope>DISULFIDE BOND</scope>
    <scope>GLYCOSYLATION AT ASN-58 AND ASN-95</scope>
</reference>
<reference key="7">
    <citation type="journal article" date="2010" name="Cell">
        <title>A tissue-specific atlas of mouse protein phosphorylation and expression.</title>
        <authorList>
            <person name="Huttlin E.L."/>
            <person name="Jedrychowski M.P."/>
            <person name="Elias J.E."/>
            <person name="Goswami T."/>
            <person name="Rad R."/>
            <person name="Beausoleil S.A."/>
            <person name="Villen J."/>
            <person name="Haas W."/>
            <person name="Sowa M.E."/>
            <person name="Gygi S.P."/>
        </authorList>
    </citation>
    <scope>IDENTIFICATION BY MASS SPECTROMETRY [LARGE SCALE ANALYSIS]</scope>
    <source>
        <tissue>Kidney</tissue>
        <tissue>Pancreas</tissue>
    </source>
</reference>
<reference key="8">
    <citation type="journal article" date="2006" name="J. Biol. Chem.">
        <title>X-ray crystal structure of leukocyte type core 2 beta1,6-N-acetylglucosaminyltransferase. Evidence for a convergence of metal ion-independent glycosyltransferase mechanism.</title>
        <authorList>
            <person name="Pak J.E."/>
            <person name="Arnoux P."/>
            <person name="Zhou S."/>
            <person name="Sivarajah P."/>
            <person name="Satkunarajah M."/>
            <person name="Xing X."/>
            <person name="Rini J.M."/>
        </authorList>
    </citation>
    <scope>X-RAY CRYSTALLOGRAPHY (2.0 ANGSTROMS) OF 38-428 ALONE AND IN COMPLEX WITH GALBETA1-3GALNAC</scope>
    <scope>DISULFIDE BOND</scope>
    <scope>ACTIVE SITE</scope>
    <scope>REGION</scope>
    <scope>GLYCOSYLATION AT ASN-58 AND ASN-95</scope>
</reference>
<reference key="9">
    <citation type="journal article" date="2011" name="J. Mol. Biol.">
        <title>Structural and mechanistic characterization of leukocyte-type core 2 beta1,6-N-acetylglucosaminyltransferase: a metal-ion-independent GT-A glycosyltransferase.</title>
        <authorList>
            <person name="Pak J.E."/>
            <person name="Satkunarajah M."/>
            <person name="Seetharaman J."/>
            <person name="Rini J.M."/>
        </authorList>
    </citation>
    <scope>X-RAY CRYSTALLOGRAPHY (2.30 ANGSTROMS) OF 38-428 IN COMPLEX WITH UDP-GLCNAC</scope>
    <scope>DISULFIDE BOND</scope>
    <scope>GLYCOSYLATION AT ASN-58 AND ASN-95</scope>
    <scope>FUNCTION</scope>
    <scope>CATALYTIC ACTIVITY</scope>
    <scope>MUTAGENESIS OF CYS-217; ARG-378 AND LYS-401</scope>
</reference>
<organism>
    <name type="scientific">Mus musculus</name>
    <name type="common">Mouse</name>
    <dbReference type="NCBI Taxonomy" id="10090"/>
    <lineage>
        <taxon>Eukaryota</taxon>
        <taxon>Metazoa</taxon>
        <taxon>Chordata</taxon>
        <taxon>Craniata</taxon>
        <taxon>Vertebrata</taxon>
        <taxon>Euteleostomi</taxon>
        <taxon>Mammalia</taxon>
        <taxon>Eutheria</taxon>
        <taxon>Euarchontoglires</taxon>
        <taxon>Glires</taxon>
        <taxon>Rodentia</taxon>
        <taxon>Myomorpha</taxon>
        <taxon>Muroidea</taxon>
        <taxon>Muridae</taxon>
        <taxon>Murinae</taxon>
        <taxon>Mus</taxon>
        <taxon>Mus</taxon>
    </lineage>
</organism>
<sequence length="428" mass="49839">MLRNLFRRRLFSCPTKYYFMLLVLSLITFSVLRIHQKPEFFSVRHLELAGDDPYSNVNCTKILQGDPEEIQKVKLEILTVQFKKRPRRTPHDYINMTRDCASFIRTRKYIVEPLTKEEVGFPIAYSIVVHHKIEMLDRLLRAIYMPQNFYCIHVDRKAEESFLAAVQGIASCFDNVFVASQLESVVYASWSRVKADLNCMKDLYRMNANWKYLINLCGMDFPIKTNLEIVRKLKCSTGENNLETEKMPPNKEERWKKRYTVVDGKLTNTGIVKAPPPLKTPLFSGSAYFVVTREYVGYVLENENIQKLMEWAQDTYSPDEFLWATIQRIPEVPGSFPSSNKYDLSDMNAIARFVKWQYFEGHVSNGAPYPPCSGVHVRSVCVFGAGDLSWMLRQHHLFANKFDMDVDPFAIQCLDEHLRHKALENLEH</sequence>
<feature type="chain" id="PRO_0000191396" description="Beta-1,3-galactosyl-O-glycosyl-glycoprotein beta-1,6-N-acetylglucosaminyltransferase">
    <location>
        <begin position="1"/>
        <end position="428"/>
    </location>
</feature>
<feature type="topological domain" description="Cytoplasmic" evidence="2">
    <location>
        <begin position="1"/>
        <end position="9"/>
    </location>
</feature>
<feature type="transmembrane region" description="Helical; Signal-anchor for type II membrane protein" evidence="2">
    <location>
        <begin position="10"/>
        <end position="32"/>
    </location>
</feature>
<feature type="topological domain" description="Lumenal" evidence="2">
    <location>
        <begin position="33"/>
        <end position="428"/>
    </location>
</feature>
<feature type="region of interest" description="Mediates interaction with GOLPH3 and is necessary and sufficient for localization to the Golgi" evidence="1">
    <location>
        <begin position="5"/>
        <end position="9"/>
    </location>
</feature>
<feature type="region of interest" description="Stem region" evidence="13">
    <location>
        <begin position="33"/>
        <end position="121"/>
    </location>
</feature>
<feature type="region of interest" description="Catalytic" evidence="13 14">
    <location>
        <begin position="122"/>
        <end position="428"/>
    </location>
</feature>
<feature type="active site" description="Nucleophile" evidence="13">
    <location>
        <position position="320"/>
    </location>
</feature>
<feature type="binding site" evidence="5 19">
    <location>
        <begin position="128"/>
        <end position="130"/>
    </location>
    <ligand>
        <name>UDP-N-acetyl-alpha-D-glucosamine</name>
        <dbReference type="ChEBI" id="CHEBI:57705"/>
    </ligand>
</feature>
<feature type="binding site" evidence="5 19">
    <location>
        <begin position="155"/>
        <end position="157"/>
    </location>
    <ligand>
        <name>UDP-N-acetyl-alpha-D-glucosamine</name>
        <dbReference type="ChEBI" id="CHEBI:57705"/>
    </ligand>
</feature>
<feature type="binding site" evidence="5 19">
    <location>
        <position position="187"/>
    </location>
    <ligand>
        <name>UDP-N-acetyl-alpha-D-glucosamine</name>
        <dbReference type="ChEBI" id="CHEBI:57705"/>
    </ligand>
</feature>
<feature type="binding site" evidence="4 18">
    <location>
        <position position="243"/>
    </location>
    <ligand>
        <name>a glycoprotein</name>
        <dbReference type="ChEBI" id="CHEBI:17089"/>
    </ligand>
    <ligandPart>
        <name>beta-D-galactosyl-(1-&gt;3)-N-acetyl-alpha-D-galactosaminyl group</name>
        <dbReference type="ChEBI" id="CHEBI:16117"/>
    </ligandPart>
</feature>
<feature type="binding site" evidence="4 18">
    <location>
        <position position="250"/>
    </location>
    <ligand>
        <name>a glycoprotein</name>
        <dbReference type="ChEBI" id="CHEBI:17089"/>
    </ligand>
    <ligandPart>
        <name>beta-D-galactosyl-(1-&gt;3)-N-acetyl-alpha-D-galactosaminyl group</name>
        <dbReference type="ChEBI" id="CHEBI:16117"/>
    </ligandPart>
</feature>
<feature type="binding site" evidence="4 18">
    <location>
        <position position="251"/>
    </location>
    <ligand>
        <name>a glycoprotein</name>
        <dbReference type="ChEBI" id="CHEBI:17089"/>
    </ligand>
    <ligandPart>
        <name>beta-D-galactosyl-(1-&gt;3)-N-acetyl-alpha-D-galactosaminyl group</name>
        <dbReference type="ChEBI" id="CHEBI:16117"/>
    </ligandPart>
</feature>
<feature type="binding site" evidence="4 18">
    <location>
        <position position="254"/>
    </location>
    <ligand>
        <name>a glycoprotein</name>
        <dbReference type="ChEBI" id="CHEBI:17089"/>
    </ligand>
    <ligandPart>
        <name>beta-D-galactosyl-(1-&gt;3)-N-acetyl-alpha-D-galactosaminyl group</name>
        <dbReference type="ChEBI" id="CHEBI:16117"/>
    </ligandPart>
</feature>
<feature type="binding site" evidence="4 18">
    <location>
        <position position="320"/>
    </location>
    <ligand>
        <name>a glycoprotein</name>
        <dbReference type="ChEBI" id="CHEBI:17089"/>
    </ligand>
    <ligandPart>
        <name>beta-D-galactosyl-(1-&gt;3)-N-acetyl-alpha-D-galactosaminyl group</name>
        <dbReference type="ChEBI" id="CHEBI:16117"/>
    </ligandPart>
</feature>
<feature type="binding site" evidence="4 18">
    <location>
        <position position="341"/>
    </location>
    <ligand>
        <name>a glycoprotein</name>
        <dbReference type="ChEBI" id="CHEBI:17089"/>
    </ligand>
    <ligandPart>
        <name>beta-D-galactosyl-(1-&gt;3)-N-acetyl-alpha-D-galactosaminyl group</name>
        <dbReference type="ChEBI" id="CHEBI:16117"/>
    </ligandPart>
</feature>
<feature type="binding site" evidence="4 18">
    <location>
        <position position="358"/>
    </location>
    <ligand>
        <name>a glycoprotein</name>
        <dbReference type="ChEBI" id="CHEBI:17089"/>
    </ligand>
    <ligandPart>
        <name>beta-D-galactosyl-(1-&gt;3)-N-acetyl-alpha-D-galactosaminyl group</name>
        <dbReference type="ChEBI" id="CHEBI:16117"/>
    </ligandPart>
</feature>
<feature type="binding site" evidence="5 19">
    <location>
        <position position="378"/>
    </location>
    <ligand>
        <name>UDP-N-acetyl-alpha-D-glucosamine</name>
        <dbReference type="ChEBI" id="CHEBI:57705"/>
    </ligand>
</feature>
<feature type="binding site" evidence="5 19">
    <location>
        <position position="401"/>
    </location>
    <ligand>
        <name>UDP-N-acetyl-alpha-D-glucosamine</name>
        <dbReference type="ChEBI" id="CHEBI:57705"/>
    </ligand>
</feature>
<feature type="glycosylation site" description="N-linked (GlcNAc...) asparagine" evidence="3 4 5 17 19">
    <location>
        <position position="58"/>
    </location>
</feature>
<feature type="glycosylation site" description="N-linked (GlcNAc...) asparagine" evidence="3 4 5 17 19">
    <location>
        <position position="95"/>
    </location>
</feature>
<feature type="disulfide bond" evidence="3 4 5 17 19">
    <location>
        <begin position="59"/>
        <end position="413"/>
    </location>
</feature>
<feature type="disulfide bond" evidence="3 4 5 17 19">
    <location>
        <begin position="100"/>
        <end position="172"/>
    </location>
</feature>
<feature type="disulfide bond" evidence="3 4 5 17 19">
    <location>
        <begin position="151"/>
        <end position="199"/>
    </location>
</feature>
<feature type="disulfide bond" evidence="3 4 5 17 19">
    <location>
        <begin position="372"/>
        <end position="381"/>
    </location>
</feature>
<feature type="mutagenesis site" description="Protects from inactivation caused by air oxidation or thiol-reactive agents. Reduces the affinity for UDP-GlcNAc; when associated with A-378. Abolishes binding to UDP-GlcNAc; when associated with A-401. Loss of catalytic activity; when associated with A-378 and A-401." evidence="3 5">
    <original>C</original>
    <variation>S</variation>
    <location>
        <position position="217"/>
    </location>
</feature>
<feature type="mutagenesis site" description="Loss of catalytic activity; when associated with S-217 and A-401. Reduces the affinity for UDP-GlcNAc; when associated with S-217." evidence="5">
    <original>R</original>
    <variation>A</variation>
    <location>
        <position position="378"/>
    </location>
</feature>
<feature type="mutagenesis site" description="Loss of catalytic activity; when associated with S-217 and A-378. Abolishes binding to UDP-GlcNAc; when associated with S-217." evidence="5">
    <original>K</original>
    <variation>A</variation>
    <location>
        <position position="401"/>
    </location>
</feature>
<feature type="sequence conflict" description="In Ref. 1; AAA60948 and 2; BAA22998/BAA22999." evidence="11" ref="1 2">
    <original>R</original>
    <variation>W</variation>
    <location>
        <position position="88"/>
    </location>
</feature>
<feature type="sequence conflict" description="In Ref. 1; AAA60948." evidence="11" ref="1">
    <original>S</original>
    <variation>T</variation>
    <location>
        <position position="191"/>
    </location>
</feature>
<feature type="sequence conflict" description="In Ref. 2; BAA22998/BAA22999." evidence="11" ref="2">
    <original>G</original>
    <variation>A</variation>
    <location>
        <position position="238"/>
    </location>
</feature>
<feature type="sequence conflict" description="In Ref. 1; AAA60948 and 2; BAA22998/BAA22999." evidence="11" ref="1 2">
    <original>T</original>
    <variation>A</variation>
    <location>
        <position position="260"/>
    </location>
</feature>
<feature type="sequence conflict" description="In Ref. 1; AAA60948 and 2; BAA22998/BAA22999." evidence="11" ref="1 2">
    <original>H</original>
    <variation>D</variation>
    <location>
        <position position="362"/>
    </location>
</feature>
<feature type="sequence conflict" description="In Ref. 2; BAA22998/BAA22999." evidence="11" ref="2">
    <original>M</original>
    <variation>I</variation>
    <location>
        <position position="404"/>
    </location>
</feature>
<feature type="sequence conflict" description="In Ref. 1; AAA60948 and 2; BAA22998/BAA22999." evidence="11" ref="1 2">
    <original>H</original>
    <variation>R</variation>
    <location>
        <position position="420"/>
    </location>
</feature>
<feature type="helix" evidence="20">
    <location>
        <begin position="59"/>
        <end position="63"/>
    </location>
</feature>
<feature type="helix" evidence="20">
    <location>
        <begin position="67"/>
        <end position="78"/>
    </location>
</feature>
<feature type="helix" evidence="20">
    <location>
        <begin position="80"/>
        <end position="83"/>
    </location>
</feature>
<feature type="helix" evidence="20">
    <location>
        <begin position="90"/>
        <end position="96"/>
    </location>
</feature>
<feature type="helix" evidence="20">
    <location>
        <begin position="100"/>
        <end position="107"/>
    </location>
</feature>
<feature type="helix" evidence="20">
    <location>
        <begin position="116"/>
        <end position="119"/>
    </location>
</feature>
<feature type="strand" evidence="20">
    <location>
        <begin position="123"/>
        <end position="129"/>
    </location>
</feature>
<feature type="helix" evidence="20">
    <location>
        <begin position="133"/>
        <end position="143"/>
    </location>
</feature>
<feature type="strand" evidence="20">
    <location>
        <begin position="148"/>
        <end position="154"/>
    </location>
</feature>
<feature type="helix" evidence="20">
    <location>
        <begin position="160"/>
        <end position="171"/>
    </location>
</feature>
<feature type="strand" evidence="20">
    <location>
        <begin position="176"/>
        <end position="178"/>
    </location>
</feature>
<feature type="helix" evidence="20">
    <location>
        <begin position="190"/>
        <end position="206"/>
    </location>
</feature>
<feature type="strand" evidence="20">
    <location>
        <begin position="212"/>
        <end position="217"/>
    </location>
</feature>
<feature type="strand" evidence="20">
    <location>
        <begin position="221"/>
        <end position="224"/>
    </location>
</feature>
<feature type="helix" evidence="20">
    <location>
        <begin position="226"/>
        <end position="235"/>
    </location>
</feature>
<feature type="turn" evidence="20">
    <location>
        <begin position="236"/>
        <end position="238"/>
    </location>
</feature>
<feature type="strand" evidence="20">
    <location>
        <begin position="244"/>
        <end position="246"/>
    </location>
</feature>
<feature type="helix" evidence="20">
    <location>
        <begin position="249"/>
        <end position="251"/>
    </location>
</feature>
<feature type="helix" evidence="20">
    <location>
        <begin position="253"/>
        <end position="256"/>
    </location>
</feature>
<feature type="strand" evidence="20">
    <location>
        <begin position="257"/>
        <end position="262"/>
    </location>
</feature>
<feature type="strand" evidence="20">
    <location>
        <begin position="265"/>
        <end position="272"/>
    </location>
</feature>
<feature type="strand" evidence="20">
    <location>
        <begin position="290"/>
        <end position="292"/>
    </location>
</feature>
<feature type="helix" evidence="20">
    <location>
        <begin position="293"/>
        <end position="301"/>
    </location>
</feature>
<feature type="helix" evidence="20">
    <location>
        <begin position="303"/>
        <end position="312"/>
    </location>
</feature>
<feature type="strand" evidence="20">
    <location>
        <begin position="315"/>
        <end position="317"/>
    </location>
</feature>
<feature type="helix" evidence="20">
    <location>
        <begin position="318"/>
        <end position="320"/>
    </location>
</feature>
<feature type="helix" evidence="20">
    <location>
        <begin position="322"/>
        <end position="326"/>
    </location>
</feature>
<feature type="helix" evidence="20">
    <location>
        <begin position="340"/>
        <end position="342"/>
    </location>
</feature>
<feature type="turn" evidence="20">
    <location>
        <begin position="346"/>
        <end position="348"/>
    </location>
</feature>
<feature type="strand" evidence="20">
    <location>
        <begin position="349"/>
        <end position="354"/>
    </location>
</feature>
<feature type="turn" evidence="20">
    <location>
        <begin position="357"/>
        <end position="359"/>
    </location>
</feature>
<feature type="helix" evidence="20">
    <location>
        <begin position="363"/>
        <end position="365"/>
    </location>
</feature>
<feature type="strand" evidence="20">
    <location>
        <begin position="373"/>
        <end position="377"/>
    </location>
</feature>
<feature type="strand" evidence="20">
    <location>
        <begin position="380"/>
        <end position="382"/>
    </location>
</feature>
<feature type="helix" evidence="20">
    <location>
        <begin position="385"/>
        <end position="387"/>
    </location>
</feature>
<feature type="helix" evidence="20">
    <location>
        <begin position="388"/>
        <end position="391"/>
    </location>
</feature>
<feature type="strand" evidence="20">
    <location>
        <begin position="397"/>
        <end position="400"/>
    </location>
</feature>
<feature type="turn" evidence="20">
    <location>
        <begin position="404"/>
        <end position="406"/>
    </location>
</feature>
<feature type="helix" evidence="20">
    <location>
        <begin position="408"/>
        <end position="423"/>
    </location>
</feature>
<protein>
    <recommendedName>
        <fullName>Beta-1,3-galactosyl-O-glycosyl-glycoprotein beta-1,6-N-acetylglucosaminyltransferase</fullName>
        <ecNumber evidence="5">2.4.1.102</ecNumber>
    </recommendedName>
    <alternativeName>
        <fullName evidence="10">Core 2 beta-1,6-N-acetylglucosaminyltransferase</fullName>
        <shortName evidence="10">C2GlcNAcT</shortName>
    </alternativeName>
    <alternativeName>
        <fullName>Core 2-branching enzyme</fullName>
    </alternativeName>
    <alternativeName>
        <fullName>Core2-GlcNAc-transferase</fullName>
        <shortName>C2GNT</shortName>
    </alternativeName>
    <alternativeName>
        <fullName evidence="9">Leukocyte type core 2 beta-1,6-N-acetylglucosaminyltransferase</fullName>
        <shortName evidence="9">C2GnT-L</shortName>
    </alternativeName>
</protein>
<accession>Q09324</accession>
<accession>O35981</accession>
<accession>Q8BRB2</accession>
<gene>
    <name type="primary">Gcnt1</name>
</gene>
<proteinExistence type="evidence at protein level"/>
<name>GCNT1_MOUSE</name>